<keyword id="KW-0002">3D-structure</keyword>
<keyword id="KW-0328">Glycosyltransferase</keyword>
<keyword id="KW-1185">Reference proteome</keyword>
<keyword id="KW-0808">Transferase</keyword>
<name>SUNS_BACSU</name>
<accession>O31986</accession>
<accession>Q7BVG7</accession>
<feature type="chain" id="PRO_0000360810" description="SPbeta prophage-derived glycosyltransferase SunS">
    <location>
        <begin position="1"/>
        <end position="422"/>
    </location>
</feature>
<feature type="helix" evidence="4">
    <location>
        <begin position="4"/>
        <end position="12"/>
    </location>
</feature>
<feature type="helix" evidence="4">
    <location>
        <begin position="18"/>
        <end position="23"/>
    </location>
</feature>
<feature type="helix" evidence="4">
    <location>
        <begin position="29"/>
        <end position="31"/>
    </location>
</feature>
<feature type="helix" evidence="4">
    <location>
        <begin position="41"/>
        <end position="50"/>
    </location>
</feature>
<feature type="strand" evidence="4">
    <location>
        <begin position="56"/>
        <end position="64"/>
    </location>
</feature>
<feature type="turn" evidence="4">
    <location>
        <begin position="66"/>
        <end position="68"/>
    </location>
</feature>
<feature type="helix" evidence="4">
    <location>
        <begin position="69"/>
        <end position="76"/>
    </location>
</feature>
<feature type="strand" evidence="4">
    <location>
        <begin position="81"/>
        <end position="87"/>
    </location>
</feature>
<feature type="strand" evidence="4">
    <location>
        <begin position="91"/>
        <end position="93"/>
    </location>
</feature>
<feature type="helix" evidence="4">
    <location>
        <begin position="94"/>
        <end position="101"/>
    </location>
</feature>
<feature type="strand" evidence="4">
    <location>
        <begin position="105"/>
        <end position="109"/>
    </location>
</feature>
<feature type="helix" evidence="4">
    <location>
        <begin position="116"/>
        <end position="126"/>
    </location>
</feature>
<feature type="strand" evidence="4">
    <location>
        <begin position="129"/>
        <end position="134"/>
    </location>
</feature>
<feature type="strand" evidence="4">
    <location>
        <begin position="139"/>
        <end position="141"/>
    </location>
</feature>
<feature type="helix" evidence="4">
    <location>
        <begin position="143"/>
        <end position="145"/>
    </location>
</feature>
<feature type="helix" evidence="4">
    <location>
        <begin position="148"/>
        <end position="158"/>
    </location>
</feature>
<feature type="strand" evidence="4">
    <location>
        <begin position="164"/>
        <end position="171"/>
    </location>
</feature>
<feature type="strand" evidence="4">
    <location>
        <begin position="183"/>
        <end position="185"/>
    </location>
</feature>
<feature type="strand" evidence="4">
    <location>
        <begin position="187"/>
        <end position="193"/>
    </location>
</feature>
<feature type="strand" evidence="4">
    <location>
        <begin position="195"/>
        <end position="197"/>
    </location>
</feature>
<feature type="strand" evidence="4">
    <location>
        <begin position="199"/>
        <end position="202"/>
    </location>
</feature>
<feature type="strand" evidence="4">
    <location>
        <begin position="210"/>
        <end position="219"/>
    </location>
</feature>
<feature type="turn" evidence="4">
    <location>
        <begin position="224"/>
        <end position="226"/>
    </location>
</feature>
<feature type="helix" evidence="4">
    <location>
        <begin position="229"/>
        <end position="246"/>
    </location>
</feature>
<feature type="helix" evidence="4">
    <location>
        <begin position="251"/>
        <end position="263"/>
    </location>
</feature>
<feature type="helix" evidence="4">
    <location>
        <begin position="267"/>
        <end position="281"/>
    </location>
</feature>
<feature type="helix" evidence="4">
    <location>
        <begin position="290"/>
        <end position="303"/>
    </location>
</feature>
<feature type="helix" evidence="4">
    <location>
        <begin position="307"/>
        <end position="320"/>
    </location>
</feature>
<feature type="helix" evidence="4">
    <location>
        <begin position="327"/>
        <end position="332"/>
    </location>
</feature>
<feature type="helix" evidence="3">
    <location>
        <begin position="367"/>
        <end position="379"/>
    </location>
</feature>
<feature type="helix" evidence="3">
    <location>
        <begin position="383"/>
        <end position="389"/>
    </location>
</feature>
<feature type="helix" evidence="3">
    <location>
        <begin position="396"/>
        <end position="418"/>
    </location>
</feature>
<reference key="1">
    <citation type="journal article" date="1997" name="Nature">
        <title>The complete genome sequence of the Gram-positive bacterium Bacillus subtilis.</title>
        <authorList>
            <person name="Kunst F."/>
            <person name="Ogasawara N."/>
            <person name="Moszer I."/>
            <person name="Albertini A.M."/>
            <person name="Alloni G."/>
            <person name="Azevedo V."/>
            <person name="Bertero M.G."/>
            <person name="Bessieres P."/>
            <person name="Bolotin A."/>
            <person name="Borchert S."/>
            <person name="Borriss R."/>
            <person name="Boursier L."/>
            <person name="Brans A."/>
            <person name="Braun M."/>
            <person name="Brignell S.C."/>
            <person name="Bron S."/>
            <person name="Brouillet S."/>
            <person name="Bruschi C.V."/>
            <person name="Caldwell B."/>
            <person name="Capuano V."/>
            <person name="Carter N.M."/>
            <person name="Choi S.-K."/>
            <person name="Codani J.-J."/>
            <person name="Connerton I.F."/>
            <person name="Cummings N.J."/>
            <person name="Daniel R.A."/>
            <person name="Denizot F."/>
            <person name="Devine K.M."/>
            <person name="Duesterhoeft A."/>
            <person name="Ehrlich S.D."/>
            <person name="Emmerson P.T."/>
            <person name="Entian K.-D."/>
            <person name="Errington J."/>
            <person name="Fabret C."/>
            <person name="Ferrari E."/>
            <person name="Foulger D."/>
            <person name="Fritz C."/>
            <person name="Fujita M."/>
            <person name="Fujita Y."/>
            <person name="Fuma S."/>
            <person name="Galizzi A."/>
            <person name="Galleron N."/>
            <person name="Ghim S.-Y."/>
            <person name="Glaser P."/>
            <person name="Goffeau A."/>
            <person name="Golightly E.J."/>
            <person name="Grandi G."/>
            <person name="Guiseppi G."/>
            <person name="Guy B.J."/>
            <person name="Haga K."/>
            <person name="Haiech J."/>
            <person name="Harwood C.R."/>
            <person name="Henaut A."/>
            <person name="Hilbert H."/>
            <person name="Holsappel S."/>
            <person name="Hosono S."/>
            <person name="Hullo M.-F."/>
            <person name="Itaya M."/>
            <person name="Jones L.-M."/>
            <person name="Joris B."/>
            <person name="Karamata D."/>
            <person name="Kasahara Y."/>
            <person name="Klaerr-Blanchard M."/>
            <person name="Klein C."/>
            <person name="Kobayashi Y."/>
            <person name="Koetter P."/>
            <person name="Koningstein G."/>
            <person name="Krogh S."/>
            <person name="Kumano M."/>
            <person name="Kurita K."/>
            <person name="Lapidus A."/>
            <person name="Lardinois S."/>
            <person name="Lauber J."/>
            <person name="Lazarevic V."/>
            <person name="Lee S.-M."/>
            <person name="Levine A."/>
            <person name="Liu H."/>
            <person name="Masuda S."/>
            <person name="Mauel C."/>
            <person name="Medigue C."/>
            <person name="Medina N."/>
            <person name="Mellado R.P."/>
            <person name="Mizuno M."/>
            <person name="Moestl D."/>
            <person name="Nakai S."/>
            <person name="Noback M."/>
            <person name="Noone D."/>
            <person name="O'Reilly M."/>
            <person name="Ogawa K."/>
            <person name="Ogiwara A."/>
            <person name="Oudega B."/>
            <person name="Park S.-H."/>
            <person name="Parro V."/>
            <person name="Pohl T.M."/>
            <person name="Portetelle D."/>
            <person name="Porwollik S."/>
            <person name="Prescott A.M."/>
            <person name="Presecan E."/>
            <person name="Pujic P."/>
            <person name="Purnelle B."/>
            <person name="Rapoport G."/>
            <person name="Rey M."/>
            <person name="Reynolds S."/>
            <person name="Rieger M."/>
            <person name="Rivolta C."/>
            <person name="Rocha E."/>
            <person name="Roche B."/>
            <person name="Rose M."/>
            <person name="Sadaie Y."/>
            <person name="Sato T."/>
            <person name="Scanlan E."/>
            <person name="Schleich S."/>
            <person name="Schroeter R."/>
            <person name="Scoffone F."/>
            <person name="Sekiguchi J."/>
            <person name="Sekowska A."/>
            <person name="Seror S.J."/>
            <person name="Serror P."/>
            <person name="Shin B.-S."/>
            <person name="Soldo B."/>
            <person name="Sorokin A."/>
            <person name="Tacconi E."/>
            <person name="Takagi T."/>
            <person name="Takahashi H."/>
            <person name="Takemaru K."/>
            <person name="Takeuchi M."/>
            <person name="Tamakoshi A."/>
            <person name="Tanaka T."/>
            <person name="Terpstra P."/>
            <person name="Tognoni A."/>
            <person name="Tosato V."/>
            <person name="Uchiyama S."/>
            <person name="Vandenbol M."/>
            <person name="Vannier F."/>
            <person name="Vassarotti A."/>
            <person name="Viari A."/>
            <person name="Wambutt R."/>
            <person name="Wedler E."/>
            <person name="Wedler H."/>
            <person name="Weitzenegger T."/>
            <person name="Winters P."/>
            <person name="Wipat A."/>
            <person name="Yamamoto H."/>
            <person name="Yamane K."/>
            <person name="Yasumoto K."/>
            <person name="Yata K."/>
            <person name="Yoshida K."/>
            <person name="Yoshikawa H.-F."/>
            <person name="Zumstein E."/>
            <person name="Yoshikawa H."/>
            <person name="Danchin A."/>
        </authorList>
    </citation>
    <scope>NUCLEOTIDE SEQUENCE [LARGE SCALE GENOMIC DNA]</scope>
    <source>
        <strain>168</strain>
    </source>
</reference>
<reference key="2">
    <citation type="journal article" date="1998" name="Microbiology">
        <title>The N-acetylmuramoyl-L-alanine amidase encoded by the Bacillus subtilis 168 prophage SP beta.</title>
        <authorList>
            <person name="Regamey A."/>
            <person name="Karamata D."/>
        </authorList>
    </citation>
    <scope>NUCLEOTIDE SEQUENCE [GENOMIC DNA] OF 86-422</scope>
    <source>
        <strain>168</strain>
    </source>
</reference>
<reference key="3">
    <citation type="journal article" date="2011" name="Nat. Chem. Biol.">
        <title>Sublancin is not a lantibiotic but an S-linked glycopeptide.</title>
        <authorList>
            <person name="Oman T.J."/>
            <person name="Boettcher J.M."/>
            <person name="Wang H."/>
            <person name="Okalibe X.N."/>
            <person name="van der Donk W.A."/>
        </authorList>
    </citation>
    <scope>FUNCTION AS A GLYCOSYLTRANSFERASE</scope>
    <source>
        <strain>168</strain>
    </source>
</reference>
<organism>
    <name type="scientific">Bacillus subtilis (strain 168)</name>
    <dbReference type="NCBI Taxonomy" id="224308"/>
    <lineage>
        <taxon>Bacteria</taxon>
        <taxon>Bacillati</taxon>
        <taxon>Bacillota</taxon>
        <taxon>Bacilli</taxon>
        <taxon>Bacillales</taxon>
        <taxon>Bacillaceae</taxon>
        <taxon>Bacillus</taxon>
    </lineage>
</organism>
<sequence>MKLSDIYLELKKGYADSLLYSDLSLLVNIMEYEKDIDVMSIQSLVAGYEKSDTPTITCGIIVYNESKRIKKCLNSVKDDFNEIIVLDSYSTDDTVDIIKCDFPDVEIKYEKWKNDFSYARNKIIEYATSEWIYFIDADNLYSKENKGKIAKVARVLEFFSIDCVVSPYIEEYTGHLYSDTRRMFRLNGKVKFHGKVHEEPMNYNHSLPFNFIVNLKVYHNGYNPSENNIKSKTRRNINLTEEMLRLEPENPKWLFFFGRELHLLDKDEEAIDYLKKSINNYKKFNDQRHFIDALVLLCTLLLQRNNYVDLTLYLDILETEYPRCVDVDYFRSAILLVDMQNKLTSLSNMIDEALTDERYSAINTTKDHFKRILISLNIQLENWERVKEISGEIKNDNMKKEIKQYLANSLHNIEHVLKGIEV</sequence>
<comment type="function">
    <text evidence="1">Transfers a hexose moiety onto 'Cys-41' of bacteriocin sublancin-168 (SunA). Accepts UDP-glucose (UDP-Glc), UDP-N-acetylglucosamine (UDP-GlcNAc), UDP-galactose (UDP-Gal), UDP-xylose (UDP-Xyl) and GDP-mannose as substrate.</text>
</comment>
<comment type="similarity">
    <text evidence="2">Belongs to the glycosyltransferase 2 family.</text>
</comment>
<protein>
    <recommendedName>
        <fullName>SPbeta prophage-derived glycosyltransferase SunS</fullName>
        <ecNumber>2.4.1.-</ecNumber>
    </recommendedName>
</protein>
<gene>
    <name type="primary">sunS</name>
    <name type="synonym">yolJ</name>
    <name type="ordered locus">BSU21450</name>
</gene>
<dbReference type="EC" id="2.4.1.-"/>
<dbReference type="EMBL" id="AL009126">
    <property type="protein sequence ID" value="CAB14063.1"/>
    <property type="molecule type" value="Genomic_DNA"/>
</dbReference>
<dbReference type="EMBL" id="AF021803">
    <property type="protein sequence ID" value="AAC38304.1"/>
    <property type="molecule type" value="Genomic_DNA"/>
</dbReference>
<dbReference type="RefSeq" id="NP_390028.1">
    <property type="nucleotide sequence ID" value="NC_000964.3"/>
</dbReference>
<dbReference type="RefSeq" id="WP_004399050.1">
    <property type="nucleotide sequence ID" value="NZ_OZ025638.1"/>
</dbReference>
<dbReference type="PDB" id="7MSN">
    <property type="method" value="X-ray"/>
    <property type="resolution" value="3.00 A"/>
    <property type="chains" value="A/B=1-422"/>
</dbReference>
<dbReference type="PDB" id="7MSP">
    <property type="method" value="X-ray"/>
    <property type="resolution" value="2.10 A"/>
    <property type="chains" value="A/B=1-335"/>
</dbReference>
<dbReference type="PDBsum" id="7MSN"/>
<dbReference type="PDBsum" id="7MSP"/>
<dbReference type="SMR" id="O31986"/>
<dbReference type="FunCoup" id="O31986">
    <property type="interactions" value="10"/>
</dbReference>
<dbReference type="STRING" id="224308.BSU21450"/>
<dbReference type="CAZy" id="GT2">
    <property type="family name" value="Glycosyltransferase Family 2"/>
</dbReference>
<dbReference type="jPOST" id="O31986"/>
<dbReference type="PaxDb" id="224308-BSU21450"/>
<dbReference type="EnsemblBacteria" id="CAB14063">
    <property type="protein sequence ID" value="CAB14063"/>
    <property type="gene ID" value="BSU_21450"/>
</dbReference>
<dbReference type="GeneID" id="939123"/>
<dbReference type="KEGG" id="bsu:BSU21450"/>
<dbReference type="PATRIC" id="fig|224308.179.peg.2342"/>
<dbReference type="eggNOG" id="COG0463">
    <property type="taxonomic scope" value="Bacteria"/>
</dbReference>
<dbReference type="InParanoid" id="O31986"/>
<dbReference type="OrthoDB" id="9815923at2"/>
<dbReference type="PhylomeDB" id="O31986"/>
<dbReference type="BioCyc" id="BSUB:BSU21450-MONOMER"/>
<dbReference type="Proteomes" id="UP000001570">
    <property type="component" value="Chromosome"/>
</dbReference>
<dbReference type="GO" id="GO:0016757">
    <property type="term" value="F:glycosyltransferase activity"/>
    <property type="evidence" value="ECO:0000318"/>
    <property type="project" value="GO_Central"/>
</dbReference>
<dbReference type="GO" id="GO:0008194">
    <property type="term" value="F:UDP-glycosyltransferase activity"/>
    <property type="evidence" value="ECO:0000314"/>
    <property type="project" value="UniProtKB"/>
</dbReference>
<dbReference type="GO" id="GO:0030152">
    <property type="term" value="P:bacteriocin biosynthetic process"/>
    <property type="evidence" value="ECO:0000314"/>
    <property type="project" value="UniProtKB"/>
</dbReference>
<dbReference type="GO" id="GO:0018240">
    <property type="term" value="P:protein S-linked glycosylation via cysteine"/>
    <property type="evidence" value="ECO:0000314"/>
    <property type="project" value="UniProtKB"/>
</dbReference>
<dbReference type="Gene3D" id="3.90.550.10">
    <property type="entry name" value="Spore Coat Polysaccharide Biosynthesis Protein SpsA, Chain A"/>
    <property type="match status" value="1"/>
</dbReference>
<dbReference type="Gene3D" id="1.25.40.10">
    <property type="entry name" value="Tetratricopeptide repeat domain"/>
    <property type="match status" value="1"/>
</dbReference>
<dbReference type="InterPro" id="IPR001173">
    <property type="entry name" value="Glyco_trans_2-like"/>
</dbReference>
<dbReference type="InterPro" id="IPR029044">
    <property type="entry name" value="Nucleotide-diphossugar_trans"/>
</dbReference>
<dbReference type="InterPro" id="IPR026499">
    <property type="entry name" value="S_glycosyl_SunS"/>
</dbReference>
<dbReference type="InterPro" id="IPR011990">
    <property type="entry name" value="TPR-like_helical_dom_sf"/>
</dbReference>
<dbReference type="NCBIfam" id="TIGR04195">
    <property type="entry name" value="S_glycosyl_SunS"/>
    <property type="match status" value="1"/>
</dbReference>
<dbReference type="PANTHER" id="PTHR43630:SF2">
    <property type="entry name" value="GLYCOSYLTRANSFERASE"/>
    <property type="match status" value="1"/>
</dbReference>
<dbReference type="PANTHER" id="PTHR43630">
    <property type="entry name" value="POLY-BETA-1,6-N-ACETYL-D-GLUCOSAMINE SYNTHASE"/>
    <property type="match status" value="1"/>
</dbReference>
<dbReference type="Pfam" id="PF00535">
    <property type="entry name" value="Glycos_transf_2"/>
    <property type="match status" value="1"/>
</dbReference>
<dbReference type="SUPFAM" id="SSF53448">
    <property type="entry name" value="Nucleotide-diphospho-sugar transferases"/>
    <property type="match status" value="1"/>
</dbReference>
<dbReference type="SUPFAM" id="SSF48452">
    <property type="entry name" value="TPR-like"/>
    <property type="match status" value="1"/>
</dbReference>
<evidence type="ECO:0000269" key="1">
    <source>
    </source>
</evidence>
<evidence type="ECO:0000305" key="2"/>
<evidence type="ECO:0007829" key="3">
    <source>
        <dbReference type="PDB" id="7MSN"/>
    </source>
</evidence>
<evidence type="ECO:0007829" key="4">
    <source>
        <dbReference type="PDB" id="7MSP"/>
    </source>
</evidence>
<proteinExistence type="evidence at protein level"/>